<feature type="chain" id="PRO_0000209339" description="Equilibrative nucleoside transporter 1">
    <location>
        <begin position="1"/>
        <end position="457"/>
    </location>
</feature>
<feature type="topological domain" description="Cytoplasmic" evidence="2">
    <location>
        <begin position="1"/>
        <end position="12"/>
    </location>
</feature>
<feature type="transmembrane region" description="Helical" evidence="2">
    <location>
        <begin position="13"/>
        <end position="29"/>
    </location>
</feature>
<feature type="topological domain" description="Extracellular" evidence="2">
    <location>
        <begin position="30"/>
        <end position="82"/>
    </location>
</feature>
<feature type="transmembrane region" description="Helical" evidence="2">
    <location>
        <begin position="83"/>
        <end position="107"/>
    </location>
</feature>
<feature type="topological domain" description="Cytoplasmic" evidence="2">
    <location>
        <begin position="108"/>
        <end position="111"/>
    </location>
</feature>
<feature type="transmembrane region" description="Helical" evidence="2">
    <location>
        <begin position="112"/>
        <end position="130"/>
    </location>
</feature>
<feature type="topological domain" description="Extracellular" evidence="2">
    <location>
        <begin position="131"/>
        <end position="138"/>
    </location>
</feature>
<feature type="transmembrane region" description="Helical" evidence="2">
    <location>
        <begin position="139"/>
        <end position="157"/>
    </location>
</feature>
<feature type="topological domain" description="Cytoplasmic" evidence="2">
    <location>
        <begin position="158"/>
        <end position="174"/>
    </location>
</feature>
<feature type="transmembrane region" description="Helical" evidence="2">
    <location>
        <begin position="175"/>
        <end position="199"/>
    </location>
</feature>
<feature type="topological domain" description="Extracellular" evidence="2">
    <location>
        <begin position="200"/>
        <end position="206"/>
    </location>
</feature>
<feature type="transmembrane region" description="Helical" evidence="2">
    <location>
        <begin position="207"/>
        <end position="227"/>
    </location>
</feature>
<feature type="topological domain" description="Cytoplasmic" evidence="2">
    <location>
        <begin position="228"/>
        <end position="291"/>
    </location>
</feature>
<feature type="transmembrane region" description="Helical" evidence="2">
    <location>
        <begin position="292"/>
        <end position="311"/>
    </location>
</feature>
<feature type="topological domain" description="Extracellular" evidence="2">
    <location>
        <begin position="312"/>
        <end position="323"/>
    </location>
</feature>
<feature type="transmembrane region" description="Helical" evidence="2">
    <location>
        <begin position="324"/>
        <end position="343"/>
    </location>
</feature>
<feature type="topological domain" description="Cytoplasmic" evidence="2">
    <location>
        <begin position="344"/>
        <end position="360"/>
    </location>
</feature>
<feature type="transmembrane region" description="Helical" evidence="2">
    <location>
        <begin position="361"/>
        <end position="379"/>
    </location>
</feature>
<feature type="topological domain" description="Extracellular" evidence="2">
    <location>
        <begin position="380"/>
        <end position="394"/>
    </location>
</feature>
<feature type="transmembrane region" description="Helical" evidence="2">
    <location>
        <begin position="395"/>
        <end position="414"/>
    </location>
</feature>
<feature type="topological domain" description="Cytoplasmic" evidence="2">
    <location>
        <begin position="415"/>
        <end position="432"/>
    </location>
</feature>
<feature type="transmembrane region" description="Helical" evidence="2">
    <location>
        <begin position="433"/>
        <end position="453"/>
    </location>
</feature>
<feature type="topological domain" description="Extracellular" evidence="2">
    <location>
        <begin position="454"/>
        <end position="457"/>
    </location>
</feature>
<feature type="region of interest" description="Disordered" evidence="3">
    <location>
        <begin position="255"/>
        <end position="275"/>
    </location>
</feature>
<feature type="compositionally biased region" description="Basic and acidic residues" evidence="3">
    <location>
        <begin position="255"/>
        <end position="266"/>
    </location>
</feature>
<feature type="site" description="Essential for nucleobase transport" evidence="1">
    <location>
        <position position="415"/>
    </location>
</feature>
<feature type="modified residue" description="Phosphoserine" evidence="11">
    <location>
        <position position="254"/>
    </location>
</feature>
<feature type="modified residue" description="Phosphoserine" evidence="1">
    <location>
        <position position="273"/>
    </location>
</feature>
<feature type="glycosylation site" description="N-linked (GlcNAc...) asparagine" evidence="2">
    <location>
        <position position="44"/>
    </location>
</feature>
<feature type="glycosylation site" description="N-linked (GlcNAc...) asparagine" evidence="2">
    <location>
        <position position="48"/>
    </location>
</feature>
<feature type="glycosylation site" description="N-linked (GlcNAc...) asparagine" evidence="2">
    <location>
        <position position="54"/>
    </location>
</feature>
<feature type="mutagenesis site" description="Increase in the sensitivities to dipyridamole and dilazep." evidence="5">
    <original>I</original>
    <variation>M</variation>
    <location>
        <position position="33"/>
    </location>
</feature>
<feature type="mutagenesis site" description="Increase in the transport capacity for adenosine but no change in substrate affinity. Increase in the sensitivities to dipyridamole and dilazep." evidence="5">
    <original>F</original>
    <variation>Y</variation>
    <location>
        <position position="335"/>
    </location>
</feature>
<feature type="mutagenesis site" description="Increase in the sensitivities to dipyridamole and dilazep." evidence="5">
    <original>N</original>
    <variation>C</variation>
    <location>
        <position position="339"/>
    </location>
</feature>
<organism>
    <name type="scientific">Rattus norvegicus</name>
    <name type="common">Rat</name>
    <dbReference type="NCBI Taxonomy" id="10116"/>
    <lineage>
        <taxon>Eukaryota</taxon>
        <taxon>Metazoa</taxon>
        <taxon>Chordata</taxon>
        <taxon>Craniata</taxon>
        <taxon>Vertebrata</taxon>
        <taxon>Euteleostomi</taxon>
        <taxon>Mammalia</taxon>
        <taxon>Eutheria</taxon>
        <taxon>Euarchontoglires</taxon>
        <taxon>Glires</taxon>
        <taxon>Rodentia</taxon>
        <taxon>Myomorpha</taxon>
        <taxon>Muroidea</taxon>
        <taxon>Muridae</taxon>
        <taxon>Murinae</taxon>
        <taxon>Rattus</taxon>
    </lineage>
</organism>
<accession>O54698</accession>
<protein>
    <recommendedName>
        <fullName evidence="8">Equilibrative nucleoside transporter 1</fullName>
        <shortName evidence="8">rENT1</shortName>
    </recommendedName>
    <alternativeName>
        <fullName evidence="8">Equilibrative nitrobenzylmercaptopurine riboside-sensitive nucleoside transporter</fullName>
        <shortName evidence="8">Equilibrative NBMPR-sensitive nucleoside transporter</shortName>
    </alternativeName>
    <alternativeName>
        <fullName>Nucleoside transporter, es-type</fullName>
    </alternativeName>
    <alternativeName>
        <fullName evidence="1">Solute carrier family 29 member 1</fullName>
    </alternativeName>
</protein>
<evidence type="ECO:0000250" key="1">
    <source>
        <dbReference type="UniProtKB" id="Q99808"/>
    </source>
</evidence>
<evidence type="ECO:0000255" key="2"/>
<evidence type="ECO:0000256" key="3">
    <source>
        <dbReference type="SAM" id="MobiDB-lite"/>
    </source>
</evidence>
<evidence type="ECO:0000269" key="4">
    <source>
    </source>
</evidence>
<evidence type="ECO:0000269" key="5">
    <source>
    </source>
</evidence>
<evidence type="ECO:0000269" key="6">
    <source>
    </source>
</evidence>
<evidence type="ECO:0000269" key="7">
    <source>
    </source>
</evidence>
<evidence type="ECO:0000303" key="8">
    <source>
    </source>
</evidence>
<evidence type="ECO:0000305" key="9"/>
<evidence type="ECO:0000312" key="10">
    <source>
        <dbReference type="RGD" id="61899"/>
    </source>
</evidence>
<evidence type="ECO:0007744" key="11">
    <source>
    </source>
</evidence>
<name>S29A1_RAT</name>
<gene>
    <name evidence="10" type="primary">Slc29a1</name>
    <name type="synonym">Ent1</name>
</gene>
<dbReference type="EMBL" id="AF015304">
    <property type="protein sequence ID" value="AAB88049.1"/>
    <property type="molecule type" value="mRNA"/>
</dbReference>
<dbReference type="EMBL" id="BC078789">
    <property type="protein sequence ID" value="AAH78789.1"/>
    <property type="molecule type" value="mRNA"/>
</dbReference>
<dbReference type="RefSeq" id="NP_001419709.1">
    <property type="nucleotide sequence ID" value="NM_001432780.1"/>
</dbReference>
<dbReference type="RefSeq" id="NP_001419710.1">
    <property type="nucleotide sequence ID" value="NM_001432781.1"/>
</dbReference>
<dbReference type="RefSeq" id="NP_001419711.1">
    <property type="nucleotide sequence ID" value="NM_001432782.1"/>
</dbReference>
<dbReference type="RefSeq" id="NP_001419712.1">
    <property type="nucleotide sequence ID" value="NM_001432783.1"/>
</dbReference>
<dbReference type="RefSeq" id="NP_001419713.1">
    <property type="nucleotide sequence ID" value="NM_001432784.1"/>
</dbReference>
<dbReference type="RefSeq" id="NP_001419714.1">
    <property type="nucleotide sequence ID" value="NM_001432785.1"/>
</dbReference>
<dbReference type="RefSeq" id="NP_001419715.1">
    <property type="nucleotide sequence ID" value="NM_001432786.1"/>
</dbReference>
<dbReference type="RefSeq" id="NP_001419716.1">
    <property type="nucleotide sequence ID" value="NM_001432787.1"/>
</dbReference>
<dbReference type="RefSeq" id="NP_001419717.1">
    <property type="nucleotide sequence ID" value="NM_001432788.1"/>
</dbReference>
<dbReference type="RefSeq" id="NP_001419718.1">
    <property type="nucleotide sequence ID" value="NM_001432789.1"/>
</dbReference>
<dbReference type="RefSeq" id="NP_113872.1">
    <property type="nucleotide sequence ID" value="NM_031684.3"/>
</dbReference>
<dbReference type="RefSeq" id="XP_006244622.1">
    <property type="nucleotide sequence ID" value="XM_006244560.2"/>
</dbReference>
<dbReference type="RefSeq" id="XP_006244623.1">
    <property type="nucleotide sequence ID" value="XM_006244561.2"/>
</dbReference>
<dbReference type="RefSeq" id="XP_006244624.1">
    <property type="nucleotide sequence ID" value="XM_006244562.3"/>
</dbReference>
<dbReference type="RefSeq" id="XP_006244625.1">
    <property type="nucleotide sequence ID" value="XM_006244563.3"/>
</dbReference>
<dbReference type="RefSeq" id="XP_017452108.1">
    <property type="nucleotide sequence ID" value="XM_017596619.1"/>
</dbReference>
<dbReference type="RefSeq" id="XP_063123741.1">
    <property type="nucleotide sequence ID" value="XM_063267671.1"/>
</dbReference>
<dbReference type="SMR" id="O54698"/>
<dbReference type="FunCoup" id="O54698">
    <property type="interactions" value="194"/>
</dbReference>
<dbReference type="STRING" id="10116.ENSRNOP00000026831"/>
<dbReference type="BindingDB" id="O54698"/>
<dbReference type="ChEMBL" id="CHEMBL4604"/>
<dbReference type="DrugCentral" id="O54698"/>
<dbReference type="TCDB" id="2.A.57.1.3">
    <property type="family name" value="the equilibrative nucleoside transporter (ent) family"/>
</dbReference>
<dbReference type="GlyCosmos" id="O54698">
    <property type="glycosylation" value="3 sites, No reported glycans"/>
</dbReference>
<dbReference type="GlyGen" id="O54698">
    <property type="glycosylation" value="3 sites"/>
</dbReference>
<dbReference type="iPTMnet" id="O54698"/>
<dbReference type="PhosphoSitePlus" id="O54698"/>
<dbReference type="jPOST" id="O54698"/>
<dbReference type="PaxDb" id="10116-ENSRNOP00000026831"/>
<dbReference type="Ensembl" id="ENSRNOT00000108087.1">
    <property type="protein sequence ID" value="ENSRNOP00000082743.1"/>
    <property type="gene ID" value="ENSRNOG00000019752.6"/>
</dbReference>
<dbReference type="GeneID" id="63997"/>
<dbReference type="KEGG" id="rno:63997"/>
<dbReference type="UCSC" id="RGD:61899">
    <property type="organism name" value="rat"/>
</dbReference>
<dbReference type="AGR" id="RGD:61899"/>
<dbReference type="CTD" id="2030"/>
<dbReference type="RGD" id="61899">
    <property type="gene designation" value="Slc29a1"/>
</dbReference>
<dbReference type="eggNOG" id="KOG1479">
    <property type="taxonomic scope" value="Eukaryota"/>
</dbReference>
<dbReference type="GeneTree" id="ENSGT00950000182898"/>
<dbReference type="HOGENOM" id="CLU_021611_6_0_1"/>
<dbReference type="InParanoid" id="O54698"/>
<dbReference type="OMA" id="KIMFINS"/>
<dbReference type="OrthoDB" id="32916at9989"/>
<dbReference type="PhylomeDB" id="O54698"/>
<dbReference type="Reactome" id="R-RNO-83936">
    <property type="pathway name" value="Transport of nucleosides and free purine and pyrimidine bases across the plasma membrane"/>
</dbReference>
<dbReference type="Reactome" id="R-RNO-9748787">
    <property type="pathway name" value="Azathioprine ADME"/>
</dbReference>
<dbReference type="Reactome" id="R-RNO-9755088">
    <property type="pathway name" value="Ribavirin ADME"/>
</dbReference>
<dbReference type="PRO" id="PR:O54698"/>
<dbReference type="Proteomes" id="UP000002494">
    <property type="component" value="Chromosome 9"/>
</dbReference>
<dbReference type="Bgee" id="ENSRNOG00000019752">
    <property type="expression patterns" value="Expressed in lung and 19 other cell types or tissues"/>
</dbReference>
<dbReference type="GO" id="GO:0016324">
    <property type="term" value="C:apical plasma membrane"/>
    <property type="evidence" value="ECO:0000250"/>
    <property type="project" value="UniProtKB"/>
</dbReference>
<dbReference type="GO" id="GO:0016323">
    <property type="term" value="C:basolateral plasma membrane"/>
    <property type="evidence" value="ECO:0000314"/>
    <property type="project" value="UniProtKB"/>
</dbReference>
<dbReference type="GO" id="GO:0005886">
    <property type="term" value="C:plasma membrane"/>
    <property type="evidence" value="ECO:0000266"/>
    <property type="project" value="RGD"/>
</dbReference>
<dbReference type="GO" id="GO:0098794">
    <property type="term" value="C:postsynapse"/>
    <property type="evidence" value="ECO:0000314"/>
    <property type="project" value="SynGO"/>
</dbReference>
<dbReference type="GO" id="GO:0098793">
    <property type="term" value="C:presynapse"/>
    <property type="evidence" value="ECO:0000314"/>
    <property type="project" value="SynGO"/>
</dbReference>
<dbReference type="GO" id="GO:0015207">
    <property type="term" value="F:adenine transmembrane transporter activity"/>
    <property type="evidence" value="ECO:0000266"/>
    <property type="project" value="RGD"/>
</dbReference>
<dbReference type="GO" id="GO:0015212">
    <property type="term" value="F:cytidine transmembrane transporter activity"/>
    <property type="evidence" value="ECO:0000250"/>
    <property type="project" value="UniProtKB"/>
</dbReference>
<dbReference type="GO" id="GO:0015208">
    <property type="term" value="F:guanine transmembrane transporter activity"/>
    <property type="evidence" value="ECO:0000266"/>
    <property type="project" value="RGD"/>
</dbReference>
<dbReference type="GO" id="GO:0005326">
    <property type="term" value="F:neurotransmitter transmembrane transporter activity"/>
    <property type="evidence" value="ECO:0000266"/>
    <property type="project" value="RGD"/>
</dbReference>
<dbReference type="GO" id="GO:0005337">
    <property type="term" value="F:nucleoside transmembrane transporter activity"/>
    <property type="evidence" value="ECO:0000314"/>
    <property type="project" value="UniProtKB"/>
</dbReference>
<dbReference type="GO" id="GO:0015211">
    <property type="term" value="F:purine nucleoside transmembrane transporter activity"/>
    <property type="evidence" value="ECO:0000266"/>
    <property type="project" value="RGD"/>
</dbReference>
<dbReference type="GO" id="GO:0015389">
    <property type="term" value="F:pyrimidine- and adenosine-specific:sodium symporter activity"/>
    <property type="evidence" value="ECO:0000250"/>
    <property type="project" value="UniProtKB"/>
</dbReference>
<dbReference type="GO" id="GO:0015210">
    <property type="term" value="F:uracil transmembrane transporter activity"/>
    <property type="evidence" value="ECO:0000266"/>
    <property type="project" value="RGD"/>
</dbReference>
<dbReference type="GO" id="GO:0015213">
    <property type="term" value="F:uridine transmembrane transporter activity"/>
    <property type="evidence" value="ECO:0000314"/>
    <property type="project" value="UniProtKB"/>
</dbReference>
<dbReference type="GO" id="GO:0015853">
    <property type="term" value="P:adenine transport"/>
    <property type="evidence" value="ECO:0000250"/>
    <property type="project" value="UniProtKB"/>
</dbReference>
<dbReference type="GO" id="GO:0032238">
    <property type="term" value="P:adenosine transport"/>
    <property type="evidence" value="ECO:0000250"/>
    <property type="project" value="UniProtKB"/>
</dbReference>
<dbReference type="GO" id="GO:0071333">
    <property type="term" value="P:cellular response to glucose stimulus"/>
    <property type="evidence" value="ECO:0000270"/>
    <property type="project" value="RGD"/>
</dbReference>
<dbReference type="GO" id="GO:0071456">
    <property type="term" value="P:cellular response to hypoxia"/>
    <property type="evidence" value="ECO:0000270"/>
    <property type="project" value="RGD"/>
</dbReference>
<dbReference type="GO" id="GO:0015861">
    <property type="term" value="P:cytidine transport"/>
    <property type="evidence" value="ECO:0000250"/>
    <property type="project" value="UniProtKB"/>
</dbReference>
<dbReference type="GO" id="GO:0060079">
    <property type="term" value="P:excitatory postsynaptic potential"/>
    <property type="evidence" value="ECO:0000315"/>
    <property type="project" value="RGD"/>
</dbReference>
<dbReference type="GO" id="GO:1903716">
    <property type="term" value="P:guanine transmembrane transport"/>
    <property type="evidence" value="ECO:0000266"/>
    <property type="project" value="RGD"/>
</dbReference>
<dbReference type="GO" id="GO:0035344">
    <property type="term" value="P:hypoxanthine transport"/>
    <property type="evidence" value="ECO:0000266"/>
    <property type="project" value="RGD"/>
</dbReference>
<dbReference type="GO" id="GO:0035340">
    <property type="term" value="P:inosine transport"/>
    <property type="evidence" value="ECO:0000250"/>
    <property type="project" value="UniProtKB"/>
</dbReference>
<dbReference type="GO" id="GO:0007595">
    <property type="term" value="P:lactation"/>
    <property type="evidence" value="ECO:0000270"/>
    <property type="project" value="RGD"/>
</dbReference>
<dbReference type="GO" id="GO:0006836">
    <property type="term" value="P:neurotransmitter transport"/>
    <property type="evidence" value="ECO:0000266"/>
    <property type="project" value="RGD"/>
</dbReference>
<dbReference type="GO" id="GO:0001504">
    <property type="term" value="P:neurotransmitter uptake"/>
    <property type="evidence" value="ECO:0000266"/>
    <property type="project" value="RGD"/>
</dbReference>
<dbReference type="GO" id="GO:0015851">
    <property type="term" value="P:nucleobase transport"/>
    <property type="evidence" value="ECO:0000250"/>
    <property type="project" value="UniProtKB"/>
</dbReference>
<dbReference type="GO" id="GO:1901642">
    <property type="term" value="P:nucleoside transmembrane transport"/>
    <property type="evidence" value="ECO:0000314"/>
    <property type="project" value="UniProtKB"/>
</dbReference>
<dbReference type="GO" id="GO:0015858">
    <property type="term" value="P:nucleoside transport"/>
    <property type="evidence" value="ECO:0000314"/>
    <property type="project" value="UniProtKB"/>
</dbReference>
<dbReference type="GO" id="GO:1904823">
    <property type="term" value="P:purine nucleobase transmembrane transport"/>
    <property type="evidence" value="ECO:0000250"/>
    <property type="project" value="UniProtKB"/>
</dbReference>
<dbReference type="GO" id="GO:0015860">
    <property type="term" value="P:purine nucleoside transmembrane transport"/>
    <property type="evidence" value="ECO:0000266"/>
    <property type="project" value="RGD"/>
</dbReference>
<dbReference type="GO" id="GO:1904082">
    <property type="term" value="P:pyrimidine nucleobase transmembrane transport"/>
    <property type="evidence" value="ECO:0000250"/>
    <property type="project" value="UniProtKB"/>
</dbReference>
<dbReference type="GO" id="GO:0072531">
    <property type="term" value="P:pyrimidine-containing compound transmembrane transport"/>
    <property type="evidence" value="ECO:0000266"/>
    <property type="project" value="RGD"/>
</dbReference>
<dbReference type="GO" id="GO:0035364">
    <property type="term" value="P:thymine transport"/>
    <property type="evidence" value="ECO:0000266"/>
    <property type="project" value="RGD"/>
</dbReference>
<dbReference type="GO" id="GO:1903791">
    <property type="term" value="P:uracil transmembrane transport"/>
    <property type="evidence" value="ECO:0000266"/>
    <property type="project" value="RGD"/>
</dbReference>
<dbReference type="GO" id="GO:0015862">
    <property type="term" value="P:uridine transmembrane transport"/>
    <property type="evidence" value="ECO:0000314"/>
    <property type="project" value="UniProtKB"/>
</dbReference>
<dbReference type="InterPro" id="IPR034764">
    <property type="entry name" value="ENT1/ENT2"/>
</dbReference>
<dbReference type="InterPro" id="IPR002259">
    <property type="entry name" value="Eqnu_transpt"/>
</dbReference>
<dbReference type="InterPro" id="IPR036259">
    <property type="entry name" value="MFS_trans_sf"/>
</dbReference>
<dbReference type="NCBIfam" id="TIGR00939">
    <property type="entry name" value="2a57"/>
    <property type="match status" value="1"/>
</dbReference>
<dbReference type="PANTHER" id="PTHR10332">
    <property type="entry name" value="EQUILIBRATIVE NUCLEOSIDE TRANSPORTER"/>
    <property type="match status" value="1"/>
</dbReference>
<dbReference type="PANTHER" id="PTHR10332:SF9">
    <property type="entry name" value="EQUILIBRATIVE NUCLEOSIDE TRANSPORTER 1"/>
    <property type="match status" value="1"/>
</dbReference>
<dbReference type="Pfam" id="PF01733">
    <property type="entry name" value="Nucleoside_tran"/>
    <property type="match status" value="1"/>
</dbReference>
<dbReference type="PIRSF" id="PIRSF016379">
    <property type="entry name" value="ENT"/>
    <property type="match status" value="1"/>
</dbReference>
<dbReference type="PRINTS" id="PR01130">
    <property type="entry name" value="DERENTRNSPRT"/>
</dbReference>
<dbReference type="SUPFAM" id="SSF103473">
    <property type="entry name" value="MFS general substrate transporter"/>
    <property type="match status" value="1"/>
</dbReference>
<sequence>MTTSHQPQDRYKAVWLIFFVLGLGTLLPWNFFITATQYFTSRLNTSQNISLVTNQSCESTEALADPSVSLPARSSLSAIFNNVMTLCAMLPLLIFTCLNSFLHQKVSQSLRILGSLLAILLVFLVTATLVKVQMDALSFFIITMIKIVLINSFGAILQASLFGLAGVLPANYTAPIMSGQGLAGFFTSVAMICAVASGSKLSESAFGYFITACAVVILAILCYLALPWMEFYRHYLQLNLAGPAEQETKLDLISEGEEPRGGREESGVPGPNSLPANRNQSIKAILKSIWVLALSVCFIFTVTIGLFPAVTAEVESSIAGTSPWKNCYFIPVACFLNFNVFDWLGRSLTAICMWPGQDSRWLPVLVACRVVFIPLLMLCNVKQHHYLPSLFKHDVWFITFMAAFAFSNGYLASLCMCFGPKKVKPAEAETAGNIMSFFLCLGLALGAVLSFLLRALV</sequence>
<proteinExistence type="evidence at protein level"/>
<comment type="function">
    <text evidence="1 6 7">Uniporter involved in the facilitative transport of nucleosides and nucleobases, and contributes to maintaining their cellular homeostasis (PubMed:9353301). Functions as a Na(+)-independent transporter (By similarity). Involved in the transport of nucleosides such as adenosine, thymidine and uridine (PubMed:23639800, PubMed:9353301). Also transports purine nucleobases (hypoxanthine, adenine, guanine) and pyrimidine nucleobases (thymine, uracil) (By similarity). Mediates basolateral nucleoside uptake into Sertoli cells, thereby regulating the transport of nucleosides in testis across the blood-testis barrier (PubMed:23639800). Regulates inosine levels in brown adipocytes tissues (BAT) and extracellular inosine levels, which controls BAT-dependent energy expenditure (By similarity).</text>
</comment>
<comment type="catalytic activity">
    <reaction evidence="5">
        <text>adenosine(in) = adenosine(out)</text>
        <dbReference type="Rhea" id="RHEA:75343"/>
        <dbReference type="ChEBI" id="CHEBI:16335"/>
    </reaction>
</comment>
<comment type="catalytic activity">
    <reaction evidence="1">
        <text>guanosine(in) = guanosine(out)</text>
        <dbReference type="Rhea" id="RHEA:75371"/>
        <dbReference type="ChEBI" id="CHEBI:16750"/>
    </reaction>
</comment>
<comment type="catalytic activity">
    <reaction evidence="1">
        <text>inosine(in) = inosine(out)</text>
        <dbReference type="Rhea" id="RHEA:75375"/>
        <dbReference type="ChEBI" id="CHEBI:17596"/>
    </reaction>
</comment>
<comment type="catalytic activity">
    <reaction evidence="6">
        <text>uridine(out) = uridine(in)</text>
        <dbReference type="Rhea" id="RHEA:71519"/>
        <dbReference type="ChEBI" id="CHEBI:16704"/>
    </reaction>
</comment>
<comment type="catalytic activity">
    <reaction evidence="1">
        <text>thymidine(in) = thymidine(out)</text>
        <dbReference type="Rhea" id="RHEA:75363"/>
        <dbReference type="ChEBI" id="CHEBI:17748"/>
    </reaction>
</comment>
<comment type="catalytic activity">
    <reaction evidence="1">
        <text>cytidine(in) = cytidine(out)</text>
        <dbReference type="Rhea" id="RHEA:75367"/>
        <dbReference type="ChEBI" id="CHEBI:17562"/>
    </reaction>
</comment>
<comment type="catalytic activity">
    <reaction evidence="1">
        <text>adenine(out) = adenine(in)</text>
        <dbReference type="Rhea" id="RHEA:71523"/>
        <dbReference type="ChEBI" id="CHEBI:16708"/>
    </reaction>
</comment>
<comment type="catalytic activity">
    <reaction evidence="1">
        <text>guanine(out) = guanine(in)</text>
        <dbReference type="Rhea" id="RHEA:71531"/>
        <dbReference type="ChEBI" id="CHEBI:16235"/>
    </reaction>
</comment>
<comment type="catalytic activity">
    <reaction evidence="1">
        <text>thymine(out) = thymine(in)</text>
        <dbReference type="Rhea" id="RHEA:71527"/>
        <dbReference type="ChEBI" id="CHEBI:17821"/>
    </reaction>
</comment>
<comment type="catalytic activity">
    <reaction evidence="1">
        <text>uracil(in) = uracil(out)</text>
        <dbReference type="Rhea" id="RHEA:69404"/>
        <dbReference type="ChEBI" id="CHEBI:17568"/>
    </reaction>
</comment>
<comment type="catalytic activity">
    <reaction evidence="1">
        <text>hypoxanthine(out) = hypoxanthine(in)</text>
        <dbReference type="Rhea" id="RHEA:71515"/>
        <dbReference type="ChEBI" id="CHEBI:17368"/>
    </reaction>
</comment>
<comment type="activity regulation">
    <text evidence="6 7">Transport activity is sensitive to low concentrations of the inhibitor nitrobenzylmercaptopurine riboside (NBMPR).</text>
</comment>
<comment type="biophysicochemical properties">
    <kinetics>
        <KM evidence="5">9.4 uM for adenosine</KM>
        <Vmax evidence="5">530.0 pmol/min/mg enzyme</Vmax>
    </kinetics>
</comment>
<comment type="subunit">
    <text evidence="1">Identified in a complex with STOM.</text>
</comment>
<comment type="subcellular location">
    <subcellularLocation>
        <location evidence="6">Basolateral cell membrane</location>
        <topology evidence="9">Multi-pass membrane protein</topology>
    </subcellularLocation>
    <subcellularLocation>
        <location evidence="1">Apical cell membrane</location>
        <topology evidence="9">Multi-pass membrane protein</topology>
    </subcellularLocation>
    <subcellularLocation>
        <location evidence="4">Cell membrane</location>
        <topology evidence="9">Multi-pass membrane protein</topology>
    </subcellularLocation>
    <text evidence="6">Localized to the basolateral membrane of Sertoli cells.</text>
</comment>
<comment type="tissue specificity">
    <text evidence="4 6 7">Expressed in jejunum, liver and lung (PubMed:9353301). Expressed in testis at the blood-testis barrier (at protein level) (PubMed:23639800). Expressed in ventricular myocytes (at protein level) (PubMed:11584005). Expressed in kidney (PubMed:23639800).</text>
</comment>
<comment type="domain">
    <text evidence="1">Cys-415 near TM10 is a major determinant of nucleobase transport activity.</text>
</comment>
<comment type="similarity">
    <text evidence="9">Belongs to the SLC29A/ENT transporter (TC 2.A.57) family.</text>
</comment>
<reference key="1">
    <citation type="journal article" date="1997" name="J. Biol. Chem.">
        <title>Molecular cloning and functional characterization of nitrobenzylthioinosine (NBMPR)-sensitive (es) and NBMPR-insensitive (ei) equilibrative nucleoside transporter proteins (rENT1 and rENT2) from rat tissues.</title>
        <authorList>
            <person name="Yao S.Y.M."/>
            <person name="Ng A.M.L."/>
            <person name="Muzyka W.R."/>
            <person name="Griffiths M."/>
            <person name="Cass C.E."/>
            <person name="Baldwin S.A."/>
            <person name="Young J.D."/>
        </authorList>
    </citation>
    <scope>NUCLEOTIDE SEQUENCE [MRNA]</scope>
    <scope>FUNCTION</scope>
    <scope>TRANSPORTER ACTIVITY</scope>
    <scope>ACTIVITY REGULATION</scope>
    <scope>TISSUE SPECIFICITY</scope>
    <source>
        <strain>Sprague-Dawley</strain>
        <tissue>Jejunum</tissue>
    </source>
</reference>
<reference key="2">
    <citation type="journal article" date="2004" name="Genome Res.">
        <title>The status, quality, and expansion of the NIH full-length cDNA project: the Mammalian Gene Collection (MGC).</title>
        <authorList>
            <consortium name="The MGC Project Team"/>
        </authorList>
    </citation>
    <scope>NUCLEOTIDE SEQUENCE [LARGE SCALE MRNA]</scope>
    <source>
        <tissue>Testis</tissue>
    </source>
</reference>
<reference key="3">
    <citation type="journal article" date="2001" name="J. Biol. Chem.">
        <title>Topology of a human equilibrative, nitrobenzylthioinosine (NBMPR)-sensitive nucleoside transporter (hENT1) implicated in the cellular uptake of adenosine and anti-cancer drugs.</title>
        <authorList>
            <person name="Sundaram M."/>
            <person name="Yao S.Y."/>
            <person name="Ingram J.C."/>
            <person name="Berry Z.A."/>
            <person name="Abidi F."/>
            <person name="Cass C.E."/>
            <person name="Baldwin S.A."/>
            <person name="Young J.D."/>
        </authorList>
    </citation>
    <scope>SUBCELLULAR LOCATION</scope>
    <scope>TISSUE SPECIFICITY</scope>
</reference>
<reference key="4">
    <citation type="journal article" date="2007" name="J. Biol. Chem.">
        <title>Residues 334 and 338 in transmembrane segment 8 of human equilibrative nucleoside transporter 1 are important determinants of inhibitor sensitivity, protein folding, and catalytic turnover.</title>
        <authorList>
            <person name="Visser F."/>
            <person name="Sun L."/>
            <person name="Damaraju V."/>
            <person name="Tackaberry T."/>
            <person name="Peng Y."/>
            <person name="Robins M.J."/>
            <person name="Baldwin S.A."/>
            <person name="Young J.D."/>
            <person name="Cass C.E."/>
        </authorList>
    </citation>
    <scope>TRANSPORTER ACTIVITY</scope>
    <scope>BIOPHYSICOCHEMICAL PROPERTIES</scope>
    <scope>MUTAGENESIS OF ILE-33; PHE-335 AND ASN-339</scope>
</reference>
<reference key="5">
    <citation type="journal article" date="2012" name="Nat. Commun.">
        <title>Quantitative maps of protein phosphorylation sites across 14 different rat organs and tissues.</title>
        <authorList>
            <person name="Lundby A."/>
            <person name="Secher A."/>
            <person name="Lage K."/>
            <person name="Nordsborg N.B."/>
            <person name="Dmytriyev A."/>
            <person name="Lundby C."/>
            <person name="Olsen J.V."/>
        </authorList>
    </citation>
    <scope>PHOSPHORYLATION [LARGE SCALE ANALYSIS] AT SER-254</scope>
    <scope>IDENTIFICATION BY MASS SPECTROMETRY [LARGE SCALE ANALYSIS]</scope>
</reference>
<reference key="6">
    <citation type="journal article" date="2013" name="J. Pharmacol. Exp. Ther.">
        <title>Basolateral uptake of nucleosides by Sertoli cells is mediated primarily by equilibrative nucleoside transporter 1.</title>
        <authorList>
            <person name="Klein D.M."/>
            <person name="Evans K.K."/>
            <person name="Hardwick R.N."/>
            <person name="Dantzler W.H."/>
            <person name="Wright S.H."/>
            <person name="Cherrington N.J."/>
        </authorList>
    </citation>
    <scope>FUNCTION</scope>
    <scope>TRANSPORTER ACTIVITY</scope>
    <scope>ACTIVITY REGULATION</scope>
    <scope>TISSUE SPECIFICITY</scope>
    <scope>SUBCELLULAR LOCATION</scope>
</reference>
<keyword id="KW-1003">Cell membrane</keyword>
<keyword id="KW-0325">Glycoprotein</keyword>
<keyword id="KW-0472">Membrane</keyword>
<keyword id="KW-0597">Phosphoprotein</keyword>
<keyword id="KW-1185">Reference proteome</keyword>
<keyword id="KW-0812">Transmembrane</keyword>
<keyword id="KW-1133">Transmembrane helix</keyword>
<keyword id="KW-0813">Transport</keyword>